<sequence>MFSFQINSNCSSTRARVGCLNTPHGDVHTPQFMPVGTLGTVKGVSPDQLLKTGSEMILANTYHLHLQPGEEIVHEAGGLHKFMGWDQPILTDSGGYQVFSLGKLNKIDDEGVEFKNPRDGSHLKLTPEIAIQIQMSLGSDIAMAFDQCPPYPATFNDVEEACLRTHNWLERSIAIHNKSDQALFGIIQGGCYPELREESARVVSSFNLPGIAIGGVSVGEPSDQINHIVRKVAPLLPEGIPRYLMGIGSLRELAIAVSNGIDLFDCVMPTRLGRHGTALVSGERWNLRNATFRNDHKPLDETCLCETCTNHTRAYLHHLIRSEELLGLTLLSVHNISHLIRFTRAMGRAIEDGCFSEDFAPWQKDSIAHYTW</sequence>
<keyword id="KW-0328">Glycosyltransferase</keyword>
<keyword id="KW-0479">Metal-binding</keyword>
<keyword id="KW-0671">Queuosine biosynthesis</keyword>
<keyword id="KW-1185">Reference proteome</keyword>
<keyword id="KW-0808">Transferase</keyword>
<keyword id="KW-0819">tRNA processing</keyword>
<keyword id="KW-0862">Zinc</keyword>
<evidence type="ECO:0000255" key="1">
    <source>
        <dbReference type="HAMAP-Rule" id="MF_00168"/>
    </source>
</evidence>
<dbReference type="EC" id="2.4.2.29" evidence="1"/>
<dbReference type="EMBL" id="CP000878">
    <property type="protein sequence ID" value="ABX08229.1"/>
    <property type="molecule type" value="Genomic_DNA"/>
</dbReference>
<dbReference type="RefSeq" id="WP_012194854.1">
    <property type="nucleotide sequence ID" value="NC_009976.1"/>
</dbReference>
<dbReference type="SMR" id="A9BDP3"/>
<dbReference type="STRING" id="93059.P9211_02981"/>
<dbReference type="KEGG" id="pmj:P9211_02981"/>
<dbReference type="eggNOG" id="COG0343">
    <property type="taxonomic scope" value="Bacteria"/>
</dbReference>
<dbReference type="HOGENOM" id="CLU_022060_0_1_3"/>
<dbReference type="OrthoDB" id="9805417at2"/>
<dbReference type="UniPathway" id="UPA00392"/>
<dbReference type="Proteomes" id="UP000000788">
    <property type="component" value="Chromosome"/>
</dbReference>
<dbReference type="GO" id="GO:0005829">
    <property type="term" value="C:cytosol"/>
    <property type="evidence" value="ECO:0007669"/>
    <property type="project" value="TreeGrafter"/>
</dbReference>
<dbReference type="GO" id="GO:0046872">
    <property type="term" value="F:metal ion binding"/>
    <property type="evidence" value="ECO:0007669"/>
    <property type="project" value="UniProtKB-KW"/>
</dbReference>
<dbReference type="GO" id="GO:0008479">
    <property type="term" value="F:tRNA-guanosine(34) queuine transglycosylase activity"/>
    <property type="evidence" value="ECO:0007669"/>
    <property type="project" value="UniProtKB-UniRule"/>
</dbReference>
<dbReference type="GO" id="GO:0008616">
    <property type="term" value="P:queuosine biosynthetic process"/>
    <property type="evidence" value="ECO:0007669"/>
    <property type="project" value="UniProtKB-UniRule"/>
</dbReference>
<dbReference type="GO" id="GO:0002099">
    <property type="term" value="P:tRNA wobble guanine modification"/>
    <property type="evidence" value="ECO:0007669"/>
    <property type="project" value="TreeGrafter"/>
</dbReference>
<dbReference type="GO" id="GO:0101030">
    <property type="term" value="P:tRNA-guanine transglycosylation"/>
    <property type="evidence" value="ECO:0007669"/>
    <property type="project" value="InterPro"/>
</dbReference>
<dbReference type="Gene3D" id="3.20.20.105">
    <property type="entry name" value="Queuine tRNA-ribosyltransferase-like"/>
    <property type="match status" value="1"/>
</dbReference>
<dbReference type="HAMAP" id="MF_00168">
    <property type="entry name" value="Q_tRNA_Tgt"/>
    <property type="match status" value="1"/>
</dbReference>
<dbReference type="InterPro" id="IPR050076">
    <property type="entry name" value="ArchSynthase1/Queuine_TRR"/>
</dbReference>
<dbReference type="InterPro" id="IPR004803">
    <property type="entry name" value="TGT"/>
</dbReference>
<dbReference type="InterPro" id="IPR036511">
    <property type="entry name" value="TGT-like_sf"/>
</dbReference>
<dbReference type="InterPro" id="IPR002616">
    <property type="entry name" value="tRNA_ribo_trans-like"/>
</dbReference>
<dbReference type="NCBIfam" id="TIGR00430">
    <property type="entry name" value="Q_tRNA_tgt"/>
    <property type="match status" value="1"/>
</dbReference>
<dbReference type="NCBIfam" id="TIGR00449">
    <property type="entry name" value="tgt_general"/>
    <property type="match status" value="1"/>
</dbReference>
<dbReference type="PANTHER" id="PTHR46499">
    <property type="entry name" value="QUEUINE TRNA-RIBOSYLTRANSFERASE"/>
    <property type="match status" value="1"/>
</dbReference>
<dbReference type="PANTHER" id="PTHR46499:SF1">
    <property type="entry name" value="QUEUINE TRNA-RIBOSYLTRANSFERASE"/>
    <property type="match status" value="1"/>
</dbReference>
<dbReference type="Pfam" id="PF01702">
    <property type="entry name" value="TGT"/>
    <property type="match status" value="1"/>
</dbReference>
<dbReference type="SUPFAM" id="SSF51713">
    <property type="entry name" value="tRNA-guanine transglycosylase"/>
    <property type="match status" value="1"/>
</dbReference>
<accession>A9BDP3</accession>
<organism>
    <name type="scientific">Prochlorococcus marinus (strain MIT 9211)</name>
    <dbReference type="NCBI Taxonomy" id="93059"/>
    <lineage>
        <taxon>Bacteria</taxon>
        <taxon>Bacillati</taxon>
        <taxon>Cyanobacteriota</taxon>
        <taxon>Cyanophyceae</taxon>
        <taxon>Synechococcales</taxon>
        <taxon>Prochlorococcaceae</taxon>
        <taxon>Prochlorococcus</taxon>
    </lineage>
</organism>
<feature type="chain" id="PRO_1000097554" description="Queuine tRNA-ribosyltransferase">
    <location>
        <begin position="1"/>
        <end position="372"/>
    </location>
</feature>
<feature type="region of interest" description="RNA binding" evidence="1">
    <location>
        <begin position="246"/>
        <end position="252"/>
    </location>
</feature>
<feature type="region of interest" description="RNA binding; important for wobble base 34 recognition" evidence="1">
    <location>
        <begin position="270"/>
        <end position="274"/>
    </location>
</feature>
<feature type="active site" description="Proton acceptor" evidence="1">
    <location>
        <position position="92"/>
    </location>
</feature>
<feature type="active site" description="Nucleophile" evidence="1">
    <location>
        <position position="265"/>
    </location>
</feature>
<feature type="binding site" evidence="1">
    <location>
        <begin position="92"/>
        <end position="96"/>
    </location>
    <ligand>
        <name>substrate</name>
    </ligand>
</feature>
<feature type="binding site" evidence="1">
    <location>
        <position position="146"/>
    </location>
    <ligand>
        <name>substrate</name>
    </ligand>
</feature>
<feature type="binding site" evidence="1">
    <location>
        <position position="188"/>
    </location>
    <ligand>
        <name>substrate</name>
    </ligand>
</feature>
<feature type="binding site" evidence="1">
    <location>
        <position position="215"/>
    </location>
    <ligand>
        <name>substrate</name>
    </ligand>
</feature>
<feature type="binding site" evidence="1">
    <location>
        <position position="303"/>
    </location>
    <ligand>
        <name>Zn(2+)</name>
        <dbReference type="ChEBI" id="CHEBI:29105"/>
    </ligand>
</feature>
<feature type="binding site" evidence="1">
    <location>
        <position position="305"/>
    </location>
    <ligand>
        <name>Zn(2+)</name>
        <dbReference type="ChEBI" id="CHEBI:29105"/>
    </ligand>
</feature>
<feature type="binding site" evidence="1">
    <location>
        <position position="308"/>
    </location>
    <ligand>
        <name>Zn(2+)</name>
        <dbReference type="ChEBI" id="CHEBI:29105"/>
    </ligand>
</feature>
<feature type="binding site" evidence="1">
    <location>
        <position position="334"/>
    </location>
    <ligand>
        <name>Zn(2+)</name>
        <dbReference type="ChEBI" id="CHEBI:29105"/>
    </ligand>
</feature>
<reference key="1">
    <citation type="journal article" date="2007" name="PLoS Genet.">
        <title>Patterns and implications of gene gain and loss in the evolution of Prochlorococcus.</title>
        <authorList>
            <person name="Kettler G.C."/>
            <person name="Martiny A.C."/>
            <person name="Huang K."/>
            <person name="Zucker J."/>
            <person name="Coleman M.L."/>
            <person name="Rodrigue S."/>
            <person name="Chen F."/>
            <person name="Lapidus A."/>
            <person name="Ferriera S."/>
            <person name="Johnson J."/>
            <person name="Steglich C."/>
            <person name="Church G.M."/>
            <person name="Richardson P."/>
            <person name="Chisholm S.W."/>
        </authorList>
    </citation>
    <scope>NUCLEOTIDE SEQUENCE [LARGE SCALE GENOMIC DNA]</scope>
    <source>
        <strain>MIT 9211</strain>
    </source>
</reference>
<protein>
    <recommendedName>
        <fullName evidence="1">Queuine tRNA-ribosyltransferase</fullName>
        <ecNumber evidence="1">2.4.2.29</ecNumber>
    </recommendedName>
    <alternativeName>
        <fullName evidence="1">Guanine insertion enzyme</fullName>
    </alternativeName>
    <alternativeName>
        <fullName evidence="1">tRNA-guanine transglycosylase</fullName>
    </alternativeName>
</protein>
<comment type="function">
    <text evidence="1">Catalyzes the base-exchange of a guanine (G) residue with the queuine precursor 7-aminomethyl-7-deazaguanine (PreQ1) at position 34 (anticodon wobble position) in tRNAs with GU(N) anticodons (tRNA-Asp, -Asn, -His and -Tyr). Catalysis occurs through a double-displacement mechanism. The nucleophile active site attacks the C1' of nucleotide 34 to detach the guanine base from the RNA, forming a covalent enzyme-RNA intermediate. The proton acceptor active site deprotonates the incoming PreQ1, allowing a nucleophilic attack on the C1' of the ribose to form the product. After dissociation, two additional enzymatic reactions on the tRNA convert PreQ1 to queuine (Q), resulting in the hypermodified nucleoside queuosine (7-(((4,5-cis-dihydroxy-2-cyclopenten-1-yl)amino)methyl)-7-deazaguanosine).</text>
</comment>
<comment type="catalytic activity">
    <reaction evidence="1">
        <text>7-aminomethyl-7-carbaguanine + guanosine(34) in tRNA = 7-aminomethyl-7-carbaguanosine(34) in tRNA + guanine</text>
        <dbReference type="Rhea" id="RHEA:24104"/>
        <dbReference type="Rhea" id="RHEA-COMP:10341"/>
        <dbReference type="Rhea" id="RHEA-COMP:10342"/>
        <dbReference type="ChEBI" id="CHEBI:16235"/>
        <dbReference type="ChEBI" id="CHEBI:58703"/>
        <dbReference type="ChEBI" id="CHEBI:74269"/>
        <dbReference type="ChEBI" id="CHEBI:82833"/>
        <dbReference type="EC" id="2.4.2.29"/>
    </reaction>
</comment>
<comment type="cofactor">
    <cofactor evidence="1">
        <name>Zn(2+)</name>
        <dbReference type="ChEBI" id="CHEBI:29105"/>
    </cofactor>
    <text evidence="1">Binds 1 zinc ion per subunit.</text>
</comment>
<comment type="pathway">
    <text evidence="1">tRNA modification; tRNA-queuosine biosynthesis.</text>
</comment>
<comment type="subunit">
    <text evidence="1">Homodimer. Within each dimer, one monomer is responsible for RNA recognition and catalysis, while the other monomer binds to the replacement base PreQ1.</text>
</comment>
<comment type="similarity">
    <text evidence="1">Belongs to the queuine tRNA-ribosyltransferase family.</text>
</comment>
<proteinExistence type="inferred from homology"/>
<name>TGT_PROM4</name>
<gene>
    <name evidence="1" type="primary">tgt</name>
    <name type="ordered locus">P9211_02981</name>
</gene>